<proteinExistence type="evidence at protein level"/>
<sequence>MDVLANPGPLKDIVLYDQEKHVSSAVWDGQERGALRCHEHTSKLGEWKLKPKQIELVERAGFGFLRRIPAISLDNPLISALVERWRRETNTFHFTVGEMTVTLEDIALLLGLGIDGKPVIGLTYTTCSAVCERYLGKSPASNSASGGMVKLSWLKDNFSECPDDASFEEVERRTRAYLLYLVGSTIFSTTTGNKVPVMYLPLFEDFDDAGTFAWGAAALAFLYRALGNASVKSQSTICGCLTLLQCWSYYHLNIGRPKLNREPIHDQFPFVLKWKGKQNGPTANRDVVFYRKALDVMKPTDVVWLPYENMNGGDMSDRMRKSLLLGRSKTMLISFDKAERHLPDRCRKQFDLFQDIPADVQRWVRKSRGVDGGVDLSNKMESELSEWEMRWENIVPDDVQGVDEADYMRWYLGITRKIVGRPISLSSEFQRTISNVRDILELAENFQIHDLDLERGNMISRIIGLAQDCLRDQVGVTATPETQQQIELGKRMRGKERVRRKGMGKRRKGIDPMEDYGGSEDESQFGPLVEVGQMHLPLSHTNSVYDGTHMYDAVTKVDDMELCDTIPQLPETQDIHKIEGSLLDDTDKFVEESKLQEEFDGEEPTESYDVKKEDKESKVEDDDAAKGFSDVSGEENANREEEDETEMGESVAESSSLDRRGENTVVA</sequence>
<feature type="chain" id="PRO_0000438664" description="Protein MAIN-LIKE 2">
    <location>
        <begin position="1"/>
        <end position="667"/>
    </location>
</feature>
<feature type="region of interest" description="Disordered" evidence="2">
    <location>
        <begin position="492"/>
        <end position="523"/>
    </location>
</feature>
<feature type="region of interest" description="Disordered" evidence="2">
    <location>
        <begin position="594"/>
        <end position="667"/>
    </location>
</feature>
<feature type="compositionally biased region" description="Basic residues" evidence="2">
    <location>
        <begin position="492"/>
        <end position="508"/>
    </location>
</feature>
<feature type="compositionally biased region" description="Acidic residues" evidence="2">
    <location>
        <begin position="512"/>
        <end position="523"/>
    </location>
</feature>
<feature type="compositionally biased region" description="Basic and acidic residues" evidence="2">
    <location>
        <begin position="608"/>
        <end position="618"/>
    </location>
</feature>
<feature type="compositionally biased region" description="Basic and acidic residues" evidence="2">
    <location>
        <begin position="656"/>
        <end position="667"/>
    </location>
</feature>
<feature type="modified residue" description="N-acetylmethionine" evidence="6">
    <location>
        <position position="1"/>
    </location>
</feature>
<dbReference type="EMBL" id="AC006955">
    <property type="status" value="NOT_ANNOTATED_CDS"/>
    <property type="molecule type" value="Genomic_DNA"/>
</dbReference>
<dbReference type="EMBL" id="CP002685">
    <property type="protein sequence ID" value="AEC05878.1"/>
    <property type="molecule type" value="Genomic_DNA"/>
</dbReference>
<dbReference type="EMBL" id="CP002685">
    <property type="protein sequence ID" value="ANM63196.1"/>
    <property type="molecule type" value="Genomic_DNA"/>
</dbReference>
<dbReference type="RefSeq" id="NP_001325301.1">
    <property type="nucleotide sequence ID" value="NM_001335267.1"/>
</dbReference>
<dbReference type="RefSeq" id="NP_671779.1">
    <property type="nucleotide sequence ID" value="NM_147246.3"/>
</dbReference>
<dbReference type="FunCoup" id="F4IFD0">
    <property type="interactions" value="1440"/>
</dbReference>
<dbReference type="STRING" id="3702.F4IFD0"/>
<dbReference type="iPTMnet" id="F4IFD0"/>
<dbReference type="PaxDb" id="3702-AT2G04865.1"/>
<dbReference type="ProteomicsDB" id="238865"/>
<dbReference type="EnsemblPlants" id="AT2G04865.1">
    <property type="protein sequence ID" value="AT2G04865.1"/>
    <property type="gene ID" value="AT2G04865"/>
</dbReference>
<dbReference type="EnsemblPlants" id="AT2G04865.2">
    <property type="protein sequence ID" value="AT2G04865.2"/>
    <property type="gene ID" value="AT2G04865"/>
</dbReference>
<dbReference type="GeneID" id="815033"/>
<dbReference type="Gramene" id="AT2G04865.1">
    <property type="protein sequence ID" value="AT2G04865.1"/>
    <property type="gene ID" value="AT2G04865"/>
</dbReference>
<dbReference type="Gramene" id="AT2G04865.2">
    <property type="protein sequence ID" value="AT2G04865.2"/>
    <property type="gene ID" value="AT2G04865"/>
</dbReference>
<dbReference type="KEGG" id="ath:AT2G04865"/>
<dbReference type="Araport" id="AT2G04865"/>
<dbReference type="TAIR" id="AT2G04865">
    <property type="gene designation" value="MAIL2"/>
</dbReference>
<dbReference type="eggNOG" id="ENOG502QW7G">
    <property type="taxonomic scope" value="Eukaryota"/>
</dbReference>
<dbReference type="HOGENOM" id="CLU_028845_3_1_1"/>
<dbReference type="InParanoid" id="F4IFD0"/>
<dbReference type="OMA" id="DVEWRPY"/>
<dbReference type="PRO" id="PR:F4IFD0"/>
<dbReference type="Proteomes" id="UP000006548">
    <property type="component" value="Chromosome 2"/>
</dbReference>
<dbReference type="ExpressionAtlas" id="F4IFD0">
    <property type="expression patterns" value="baseline and differential"/>
</dbReference>
<dbReference type="GO" id="GO:0005634">
    <property type="term" value="C:nucleus"/>
    <property type="evidence" value="ECO:0000314"/>
    <property type="project" value="UniProtKB"/>
</dbReference>
<dbReference type="GO" id="GO:0008483">
    <property type="term" value="F:transaminase activity"/>
    <property type="evidence" value="ECO:0007669"/>
    <property type="project" value="UniProtKB-KW"/>
</dbReference>
<dbReference type="GO" id="GO:0010073">
    <property type="term" value="P:meristem maintenance"/>
    <property type="evidence" value="ECO:0007669"/>
    <property type="project" value="InterPro"/>
</dbReference>
<dbReference type="InterPro" id="IPR019557">
    <property type="entry name" value="AminoTfrase-like_pln_mobile"/>
</dbReference>
<dbReference type="InterPro" id="IPR044824">
    <property type="entry name" value="MAIN-like"/>
</dbReference>
<dbReference type="PANTHER" id="PTHR46033">
    <property type="entry name" value="PROTEIN MAIN-LIKE 2"/>
    <property type="match status" value="1"/>
</dbReference>
<dbReference type="PANTHER" id="PTHR46033:SF1">
    <property type="entry name" value="PROTEIN MAIN-LIKE 2"/>
    <property type="match status" value="1"/>
</dbReference>
<dbReference type="Pfam" id="PF10536">
    <property type="entry name" value="PMD"/>
    <property type="match status" value="1"/>
</dbReference>
<comment type="function">
    <text evidence="1">Maybe required to maintain cell division activity in meristematic cells.</text>
</comment>
<comment type="subcellular location">
    <subcellularLocation>
        <location evidence="3">Nucleus</location>
    </subcellularLocation>
</comment>
<comment type="tissue specificity">
    <text evidence="3">Expressed in root tips, the shoot apical meristem (SAM), leaves, mature flowers and embryos.</text>
</comment>
<evidence type="ECO:0000250" key="1">
    <source>
        <dbReference type="UniProtKB" id="Q9LMT7"/>
    </source>
</evidence>
<evidence type="ECO:0000256" key="2">
    <source>
        <dbReference type="SAM" id="MobiDB-lite"/>
    </source>
</evidence>
<evidence type="ECO:0000269" key="3">
    <source>
    </source>
</evidence>
<evidence type="ECO:0000303" key="4">
    <source>
    </source>
</evidence>
<evidence type="ECO:0000312" key="5">
    <source>
        <dbReference type="Araport" id="AT2G04865"/>
    </source>
</evidence>
<evidence type="ECO:0007744" key="6">
    <source>
    </source>
</evidence>
<keyword id="KW-0007">Acetylation</keyword>
<keyword id="KW-0032">Aminotransferase</keyword>
<keyword id="KW-0539">Nucleus</keyword>
<keyword id="KW-1185">Reference proteome</keyword>
<keyword id="KW-0808">Transferase</keyword>
<gene>
    <name evidence="5" type="ordered locus">At2g04865</name>
</gene>
<reference key="1">
    <citation type="journal article" date="1999" name="Nature">
        <title>Sequence and analysis of chromosome 2 of the plant Arabidopsis thaliana.</title>
        <authorList>
            <person name="Lin X."/>
            <person name="Kaul S."/>
            <person name="Rounsley S.D."/>
            <person name="Shea T.P."/>
            <person name="Benito M.-I."/>
            <person name="Town C.D."/>
            <person name="Fujii C.Y."/>
            <person name="Mason T.M."/>
            <person name="Bowman C.L."/>
            <person name="Barnstead M.E."/>
            <person name="Feldblyum T.V."/>
            <person name="Buell C.R."/>
            <person name="Ketchum K.A."/>
            <person name="Lee J.J."/>
            <person name="Ronning C.M."/>
            <person name="Koo H.L."/>
            <person name="Moffat K.S."/>
            <person name="Cronin L.A."/>
            <person name="Shen M."/>
            <person name="Pai G."/>
            <person name="Van Aken S."/>
            <person name="Umayam L."/>
            <person name="Tallon L.J."/>
            <person name="Gill J.E."/>
            <person name="Adams M.D."/>
            <person name="Carrera A.J."/>
            <person name="Creasy T.H."/>
            <person name="Goodman H.M."/>
            <person name="Somerville C.R."/>
            <person name="Copenhaver G.P."/>
            <person name="Preuss D."/>
            <person name="Nierman W.C."/>
            <person name="White O."/>
            <person name="Eisen J.A."/>
            <person name="Salzberg S.L."/>
            <person name="Fraser C.M."/>
            <person name="Venter J.C."/>
        </authorList>
    </citation>
    <scope>NUCLEOTIDE SEQUENCE [LARGE SCALE GENOMIC DNA]</scope>
    <source>
        <strain>cv. Columbia</strain>
    </source>
</reference>
<reference key="2">
    <citation type="journal article" date="2017" name="Plant J.">
        <title>Araport11: a complete reannotation of the Arabidopsis thaliana reference genome.</title>
        <authorList>
            <person name="Cheng C.Y."/>
            <person name="Krishnakumar V."/>
            <person name="Chan A.P."/>
            <person name="Thibaud-Nissen F."/>
            <person name="Schobel S."/>
            <person name="Town C.D."/>
        </authorList>
    </citation>
    <scope>GENOME REANNOTATION</scope>
    <source>
        <strain>cv. Columbia</strain>
    </source>
</reference>
<reference key="3">
    <citation type="journal article" date="2009" name="Plant Physiol.">
        <title>Large-scale Arabidopsis phosphoproteome profiling reveals novel chloroplast kinase substrates and phosphorylation networks.</title>
        <authorList>
            <person name="Reiland S."/>
            <person name="Messerli G."/>
            <person name="Baerenfaller K."/>
            <person name="Gerrits B."/>
            <person name="Endler A."/>
            <person name="Grossmann J."/>
            <person name="Gruissem W."/>
            <person name="Baginsky S."/>
        </authorList>
    </citation>
    <scope>IDENTIFICATION BY MASS SPECTROMETRY [LARGE SCALE ANALYSIS]</scope>
</reference>
<reference key="4">
    <citation type="journal article" date="2012" name="Mol. Cell. Proteomics">
        <title>Comparative large-scale characterisation of plant vs. mammal proteins reveals similar and idiosyncratic N-alpha acetylation features.</title>
        <authorList>
            <person name="Bienvenut W.V."/>
            <person name="Sumpton D."/>
            <person name="Martinez A."/>
            <person name="Lilla S."/>
            <person name="Espagne C."/>
            <person name="Meinnel T."/>
            <person name="Giglione C."/>
        </authorList>
    </citation>
    <scope>ACETYLATION [LARGE SCALE ANALYSIS] AT MET-1</scope>
    <scope>IDENTIFICATION BY MASS SPECTROMETRY [LARGE SCALE ANALYSIS]</scope>
</reference>
<reference key="5">
    <citation type="journal article" date="2014" name="Plant J.">
        <title>MAIN-LIKE1 is a crucial factor for correct cell division and differentiation in Arabidopsis thaliana.</title>
        <authorList>
            <person name="Uehlken C."/>
            <person name="Horvath B."/>
            <person name="Stadler R."/>
            <person name="Sauer N."/>
            <person name="Weingartner M."/>
        </authorList>
    </citation>
    <scope>SUBCELLULAR LOCATION</scope>
    <scope>TISSUE SPECIFICITY</scope>
</reference>
<name>MAIL2_ARATH</name>
<accession>F4IFD0</accession>
<protein>
    <recommendedName>
        <fullName evidence="4">Protein MAIN-LIKE 2</fullName>
    </recommendedName>
</protein>
<organism>
    <name type="scientific">Arabidopsis thaliana</name>
    <name type="common">Mouse-ear cress</name>
    <dbReference type="NCBI Taxonomy" id="3702"/>
    <lineage>
        <taxon>Eukaryota</taxon>
        <taxon>Viridiplantae</taxon>
        <taxon>Streptophyta</taxon>
        <taxon>Embryophyta</taxon>
        <taxon>Tracheophyta</taxon>
        <taxon>Spermatophyta</taxon>
        <taxon>Magnoliopsida</taxon>
        <taxon>eudicotyledons</taxon>
        <taxon>Gunneridae</taxon>
        <taxon>Pentapetalae</taxon>
        <taxon>rosids</taxon>
        <taxon>malvids</taxon>
        <taxon>Brassicales</taxon>
        <taxon>Brassicaceae</taxon>
        <taxon>Camelineae</taxon>
        <taxon>Arabidopsis</taxon>
    </lineage>
</organism>